<protein>
    <recommendedName>
        <fullName>Non-structural protein 1</fullName>
        <shortName>NSP1</shortName>
    </recommendedName>
</protein>
<reference key="1">
    <citation type="journal article" date="2004" name="Virus Res.">
        <title>Cloning and sequence analysis of dsRNA segments 5, 6 and 7 of a novel non-group A, B, C adult rotavirus that caused an outbreak of gastroenteritis in China.</title>
        <authorList>
            <person name="Yang H."/>
            <person name="Makeyev E.V."/>
            <person name="Kang Z."/>
            <person name="Ji S."/>
            <person name="Bamford D.H."/>
            <person name="van Dijk A.A."/>
        </authorList>
    </citation>
    <scope>NUCLEOTIDE SEQUENCE [GENOMIC RNA]</scope>
</reference>
<reference key="2">
    <citation type="journal article" date="2008" name="J. Gen. Virol.">
        <title>Molecular characterization of a novel adult diarrhoea rotavirus strain J19 isolated in China and its significance for the evolution and origin of group B rotaviruses.</title>
        <authorList>
            <person name="Jiang S."/>
            <person name="Ji S."/>
            <person name="Tang Q."/>
            <person name="Cui X."/>
            <person name="Yang H."/>
            <person name="Kan B."/>
            <person name="Gao S."/>
        </authorList>
    </citation>
    <scope>NUCLEOTIDE SEQUENCE [GENOMIC RNA]</scope>
</reference>
<keyword id="KW-1185">Reference proteome</keyword>
<keyword id="KW-0694">RNA-binding</keyword>
<evidence type="ECO:0000255" key="1"/>
<evidence type="ECO:0000255" key="2">
    <source>
        <dbReference type="PROSITE-ProRule" id="PRU00266"/>
    </source>
</evidence>
<organismHost>
    <name type="scientific">Homo sapiens</name>
    <name type="common">Human</name>
    <dbReference type="NCBI Taxonomy" id="9606"/>
</organismHost>
<sequence length="395" mass="45649">MMSIQRAAQINRQFDYMSIKELWMAKFPLHKPGDCLDMFKNGDYTGPTMGCIQKTKASKKNTIFHIKSDFNSTEYDEPPISGFKMFTQHCCQRIDEHFCGALHPVISNIEFEHNQLKTRPQVASELNLFIPCGIKNLKIESGEKSTWIVGTKFRKCMCLKPVIVAATIIGTPINKNLITFCSSDYIQVIVNRNREGSCGICMGNVSTYEACGNWTNETWGEEFSLDLKLCYKCTPVAFIFSLMMSTGHKPYVSKKQFEENRRKWERVLNYKICKENLDSHLACANHENVYKSIKKYEFFDSVWVYHLANSSWVRDLTRECIESNPGPNYIQLLNEHSQRYGFVQPTYEIIAVVSDGHHSYQCTCYYKDMKTQSTGPSKKNAKHQAAEQMFRHQCF</sequence>
<name>NSP1N_ROTJ1</name>
<feature type="chain" id="PRO_0000369859" description="Non-structural protein 1">
    <location>
        <begin position="1"/>
        <end position="395"/>
    </location>
</feature>
<feature type="domain" description="DRBM" evidence="2">
    <location>
        <begin position="328"/>
        <end position="395"/>
    </location>
</feature>
<feature type="site" description="Cleavage; by autolysis" evidence="1">
    <location>
        <begin position="326"/>
        <end position="327"/>
    </location>
</feature>
<dbReference type="EMBL" id="AY632079">
    <property type="protein sequence ID" value="AAU88188.1"/>
    <property type="molecule type" value="Genomic_RNA"/>
</dbReference>
<dbReference type="EMBL" id="DQ113901">
    <property type="protein sequence ID" value="AAZ03489.1"/>
    <property type="molecule type" value="Genomic_RNA"/>
</dbReference>
<dbReference type="RefSeq" id="YP_392494.1">
    <property type="nucleotide sequence ID" value="NC_007552.1"/>
</dbReference>
<dbReference type="SMR" id="Q45UF6"/>
<dbReference type="GeneID" id="5076654"/>
<dbReference type="KEGG" id="vg:5076654"/>
<dbReference type="OrthoDB" id="38101at10239"/>
<dbReference type="Proteomes" id="UP000007663">
    <property type="component" value="Genome"/>
</dbReference>
<dbReference type="GO" id="GO:0003723">
    <property type="term" value="F:RNA binding"/>
    <property type="evidence" value="ECO:0007669"/>
    <property type="project" value="UniProtKB-KW"/>
</dbReference>
<dbReference type="CDD" id="cd00048">
    <property type="entry name" value="DSRM_SF"/>
    <property type="match status" value="1"/>
</dbReference>
<dbReference type="Gene3D" id="3.30.160.20">
    <property type="match status" value="1"/>
</dbReference>
<dbReference type="InterPro" id="IPR014720">
    <property type="entry name" value="dsRBD_dom"/>
</dbReference>
<dbReference type="Pfam" id="PF00035">
    <property type="entry name" value="dsrm"/>
    <property type="match status" value="1"/>
</dbReference>
<dbReference type="SMART" id="SM00358">
    <property type="entry name" value="DSRM"/>
    <property type="match status" value="1"/>
</dbReference>
<dbReference type="SUPFAM" id="SSF54768">
    <property type="entry name" value="dsRNA-binding domain-like"/>
    <property type="match status" value="1"/>
</dbReference>
<dbReference type="PROSITE" id="PS50137">
    <property type="entry name" value="DS_RBD"/>
    <property type="match status" value="1"/>
</dbReference>
<proteinExistence type="predicted"/>
<organism>
    <name type="scientific">Rotavirus X (strain RVX/Human/China/NADRV-J19/1997/GXP[X])</name>
    <name type="common">RV ADRV-N</name>
    <name type="synonym">Rotavirus (isolate novel adult diarrhea rotavirus-J19)</name>
    <dbReference type="NCBI Taxonomy" id="335103"/>
    <lineage>
        <taxon>Viruses</taxon>
        <taxon>Riboviria</taxon>
        <taxon>Orthornavirae</taxon>
        <taxon>Duplornaviricota</taxon>
        <taxon>Resentoviricetes</taxon>
        <taxon>Reovirales</taxon>
        <taxon>Sedoreoviridae</taxon>
        <taxon>Rotavirus</taxon>
        <taxon>Rotavirus H</taxon>
    </lineage>
</organism>
<accession>Q45UF6</accession>
<accession>Q5Y9B1</accession>